<evidence type="ECO:0000255" key="1">
    <source>
        <dbReference type="HAMAP-Rule" id="MF_01328"/>
    </source>
</evidence>
<evidence type="ECO:0000256" key="2">
    <source>
        <dbReference type="SAM" id="MobiDB-lite"/>
    </source>
</evidence>
<evidence type="ECO:0000305" key="3"/>
<feature type="chain" id="PRO_0000242365" description="Large ribosomal subunit protein uL4">
    <location>
        <begin position="1"/>
        <end position="210"/>
    </location>
</feature>
<feature type="region of interest" description="Disordered" evidence="2">
    <location>
        <begin position="41"/>
        <end position="60"/>
    </location>
</feature>
<feature type="region of interest" description="Disordered" evidence="2">
    <location>
        <begin position="67"/>
        <end position="98"/>
    </location>
</feature>
<feature type="compositionally biased region" description="Polar residues" evidence="2">
    <location>
        <begin position="41"/>
        <end position="51"/>
    </location>
</feature>
<name>RL4_DEHM1</name>
<sequence length="210" mass="23450">MEIPVYNASGEIIKNISISEDVFGVPFNEALVHQAFVAQQANARQGTQSTKTRGEVQGSSRKIYRQKGTGNARMGTNRSPVRRHGGVAFGPRPRDFSKDLPKKMRRQAIRCVLSFKLESGELKVVDQLSFDEPKTRDMAKILAALQVMSPTLIAVDNPDTNFIKSARNIPAVKTTPANLLNISDMLRNKQLVMTEEAVRQVEELWGQRSR</sequence>
<comment type="function">
    <text evidence="1">One of the primary rRNA binding proteins, this protein initially binds near the 5'-end of the 23S rRNA. It is important during the early stages of 50S assembly. It makes multiple contacts with different domains of the 23S rRNA in the assembled 50S subunit and ribosome.</text>
</comment>
<comment type="function">
    <text evidence="1">Forms part of the polypeptide exit tunnel.</text>
</comment>
<comment type="subunit">
    <text evidence="1">Part of the 50S ribosomal subunit.</text>
</comment>
<comment type="similarity">
    <text evidence="1">Belongs to the universal ribosomal protein uL4 family.</text>
</comment>
<proteinExistence type="inferred from homology"/>
<organism>
    <name type="scientific">Dehalococcoides mccartyi (strain ATCC BAA-2266 / KCTC 15142 / 195)</name>
    <name type="common">Dehalococcoides ethenogenes (strain 195)</name>
    <dbReference type="NCBI Taxonomy" id="243164"/>
    <lineage>
        <taxon>Bacteria</taxon>
        <taxon>Bacillati</taxon>
        <taxon>Chloroflexota</taxon>
        <taxon>Dehalococcoidia</taxon>
        <taxon>Dehalococcoidales</taxon>
        <taxon>Dehalococcoidaceae</taxon>
        <taxon>Dehalococcoides</taxon>
    </lineage>
</organism>
<reference key="1">
    <citation type="journal article" date="2005" name="Science">
        <title>Genome sequence of the PCE-dechlorinating bacterium Dehalococcoides ethenogenes.</title>
        <authorList>
            <person name="Seshadri R."/>
            <person name="Adrian L."/>
            <person name="Fouts D.E."/>
            <person name="Eisen J.A."/>
            <person name="Phillippy A.M."/>
            <person name="Methe B.A."/>
            <person name="Ward N.L."/>
            <person name="Nelson W.C."/>
            <person name="DeBoy R.T."/>
            <person name="Khouri H.M."/>
            <person name="Kolonay J.F."/>
            <person name="Dodson R.J."/>
            <person name="Daugherty S.C."/>
            <person name="Brinkac L.M."/>
            <person name="Sullivan S.A."/>
            <person name="Madupu R."/>
            <person name="Nelson K.E."/>
            <person name="Kang K.H."/>
            <person name="Impraim M."/>
            <person name="Tran K."/>
            <person name="Robinson J.M."/>
            <person name="Forberger H.A."/>
            <person name="Fraser C.M."/>
            <person name="Zinder S.H."/>
            <person name="Heidelberg J.F."/>
        </authorList>
    </citation>
    <scope>NUCLEOTIDE SEQUENCE [LARGE SCALE GENOMIC DNA]</scope>
    <source>
        <strain>ATCC BAA-2266 / KCTC 15142 / 195</strain>
    </source>
</reference>
<gene>
    <name evidence="1" type="primary">rplD</name>
    <name type="ordered locus">DET0475</name>
</gene>
<accession>Q3Z980</accession>
<dbReference type="EMBL" id="CP000027">
    <property type="protein sequence ID" value="AAW40190.1"/>
    <property type="molecule type" value="Genomic_DNA"/>
</dbReference>
<dbReference type="RefSeq" id="WP_010936252.1">
    <property type="nucleotide sequence ID" value="NC_002936.3"/>
</dbReference>
<dbReference type="SMR" id="Q3Z980"/>
<dbReference type="FunCoup" id="Q3Z980">
    <property type="interactions" value="358"/>
</dbReference>
<dbReference type="STRING" id="243164.DET0475"/>
<dbReference type="GeneID" id="3230154"/>
<dbReference type="KEGG" id="det:DET0475"/>
<dbReference type="PATRIC" id="fig|243164.10.peg.453"/>
<dbReference type="eggNOG" id="COG0088">
    <property type="taxonomic scope" value="Bacteria"/>
</dbReference>
<dbReference type="HOGENOM" id="CLU_041575_5_2_0"/>
<dbReference type="InParanoid" id="Q3Z980"/>
<dbReference type="Proteomes" id="UP000008289">
    <property type="component" value="Chromosome"/>
</dbReference>
<dbReference type="GO" id="GO:1990904">
    <property type="term" value="C:ribonucleoprotein complex"/>
    <property type="evidence" value="ECO:0007669"/>
    <property type="project" value="UniProtKB-KW"/>
</dbReference>
<dbReference type="GO" id="GO:0005840">
    <property type="term" value="C:ribosome"/>
    <property type="evidence" value="ECO:0007669"/>
    <property type="project" value="UniProtKB-KW"/>
</dbReference>
<dbReference type="GO" id="GO:0019843">
    <property type="term" value="F:rRNA binding"/>
    <property type="evidence" value="ECO:0007669"/>
    <property type="project" value="UniProtKB-UniRule"/>
</dbReference>
<dbReference type="GO" id="GO:0003735">
    <property type="term" value="F:structural constituent of ribosome"/>
    <property type="evidence" value="ECO:0007669"/>
    <property type="project" value="InterPro"/>
</dbReference>
<dbReference type="GO" id="GO:0006412">
    <property type="term" value="P:translation"/>
    <property type="evidence" value="ECO:0007669"/>
    <property type="project" value="UniProtKB-UniRule"/>
</dbReference>
<dbReference type="Gene3D" id="3.40.1370.10">
    <property type="match status" value="1"/>
</dbReference>
<dbReference type="HAMAP" id="MF_01328_B">
    <property type="entry name" value="Ribosomal_uL4_B"/>
    <property type="match status" value="1"/>
</dbReference>
<dbReference type="InterPro" id="IPR002136">
    <property type="entry name" value="Ribosomal_uL4"/>
</dbReference>
<dbReference type="InterPro" id="IPR013005">
    <property type="entry name" value="Ribosomal_uL4-like"/>
</dbReference>
<dbReference type="InterPro" id="IPR023574">
    <property type="entry name" value="Ribosomal_uL4_dom_sf"/>
</dbReference>
<dbReference type="NCBIfam" id="TIGR03953">
    <property type="entry name" value="rplD_bact"/>
    <property type="match status" value="1"/>
</dbReference>
<dbReference type="PANTHER" id="PTHR10746">
    <property type="entry name" value="50S RIBOSOMAL PROTEIN L4"/>
    <property type="match status" value="1"/>
</dbReference>
<dbReference type="PANTHER" id="PTHR10746:SF6">
    <property type="entry name" value="LARGE RIBOSOMAL SUBUNIT PROTEIN UL4M"/>
    <property type="match status" value="1"/>
</dbReference>
<dbReference type="Pfam" id="PF00573">
    <property type="entry name" value="Ribosomal_L4"/>
    <property type="match status" value="1"/>
</dbReference>
<dbReference type="SUPFAM" id="SSF52166">
    <property type="entry name" value="Ribosomal protein L4"/>
    <property type="match status" value="1"/>
</dbReference>
<keyword id="KW-0687">Ribonucleoprotein</keyword>
<keyword id="KW-0689">Ribosomal protein</keyword>
<keyword id="KW-0694">RNA-binding</keyword>
<keyword id="KW-0699">rRNA-binding</keyword>
<protein>
    <recommendedName>
        <fullName evidence="1">Large ribosomal subunit protein uL4</fullName>
    </recommendedName>
    <alternativeName>
        <fullName evidence="3">50S ribosomal protein L4</fullName>
    </alternativeName>
</protein>